<feature type="signal peptide" evidence="2">
    <location>
        <begin position="1"/>
        <end position="17"/>
    </location>
</feature>
<feature type="chain" id="PRO_0000035557" description="U1-agatoxin-Ta1c">
    <location>
        <begin position="18"/>
        <end position="67"/>
    </location>
</feature>
<feature type="modified residue" description="Lysine amide" evidence="2">
    <location>
        <position position="67"/>
    </location>
</feature>
<feature type="disulfide bond" evidence="1">
    <location>
        <begin position="23"/>
        <end position="53"/>
    </location>
</feature>
<feature type="disulfide bond" evidence="1">
    <location>
        <begin position="39"/>
        <end position="49"/>
    </location>
</feature>
<feature type="disulfide bond" evidence="1">
    <location>
        <begin position="42"/>
        <end position="62"/>
    </location>
</feature>
<name>TXI3_ERAAG</name>
<organism>
    <name type="scientific">Eratigena agrestis</name>
    <name type="common">Hobo spider</name>
    <name type="synonym">Tegenaria agrestis</name>
    <dbReference type="NCBI Taxonomy" id="1686644"/>
    <lineage>
        <taxon>Eukaryota</taxon>
        <taxon>Metazoa</taxon>
        <taxon>Ecdysozoa</taxon>
        <taxon>Arthropoda</taxon>
        <taxon>Chelicerata</taxon>
        <taxon>Arachnida</taxon>
        <taxon>Araneae</taxon>
        <taxon>Araneomorphae</taxon>
        <taxon>Entelegynae</taxon>
        <taxon>Agelenidae</taxon>
        <taxon>Eratigena</taxon>
    </lineage>
</organism>
<sequence length="68" mass="7705">MKLQLMICLVLLPCFFCEPDEICRARMTNKEFTYKSNVCNGCGDQVAACEAECFRNDVYTACHEAQKG</sequence>
<evidence type="ECO:0000250" key="1">
    <source>
        <dbReference type="UniProtKB" id="O46166"/>
    </source>
</evidence>
<evidence type="ECO:0000269" key="2">
    <source>
    </source>
</evidence>
<evidence type="ECO:0000303" key="3">
    <source>
    </source>
</evidence>
<evidence type="ECO:0000305" key="4"/>
<evidence type="ECO:0000305" key="5">
    <source>
    </source>
</evidence>
<proteinExistence type="evidence at protein level"/>
<comment type="function">
    <text evidence="2">Toxin that paralyzes insects. May have a direct effect on the insect central nervous system.</text>
</comment>
<comment type="subcellular location">
    <subcellularLocation>
        <location evidence="2">Secreted</location>
    </subcellularLocation>
</comment>
<comment type="tissue specificity">
    <text evidence="5">Expressed by the venom gland.</text>
</comment>
<comment type="domain">
    <text evidence="1">Comprises exclusively 4 tightly packed alpha helices (no beta strand is present).</text>
</comment>
<comment type="mass spectrometry" mass="5643.09" method="Electrospray" evidence="2"/>
<comment type="miscellaneous">
    <text evidence="1">Arose via modification of ancestral neuropeptide hormones (ion transport peptide/crustacean hyperglycemic hormones (ITP/CHH)).</text>
</comment>
<comment type="similarity">
    <text evidence="4">Belongs to the helical arthropod-neuropeptide-derived (HAND) family.</text>
</comment>
<protein>
    <recommendedName>
        <fullName>U1-agatoxin-Ta1c</fullName>
        <shortName>U1-AGTX-Ta1c</shortName>
    </recommendedName>
    <alternativeName>
        <fullName evidence="3">Insecticidal toxin 3</fullName>
        <shortName evidence="3">TaITX-3</shortName>
    </alternativeName>
</protein>
<dbReference type="EMBL" id="AJ224129">
    <property type="protein sequence ID" value="CAA11841.1"/>
    <property type="molecule type" value="mRNA"/>
</dbReference>
<dbReference type="SMR" id="O46168"/>
<dbReference type="ArachnoServer" id="AS000351">
    <property type="toxin name" value="U1-agatoxin-Ta1c"/>
</dbReference>
<dbReference type="GO" id="GO:0005576">
    <property type="term" value="C:extracellular region"/>
    <property type="evidence" value="ECO:0007669"/>
    <property type="project" value="UniProtKB-SubCell"/>
</dbReference>
<dbReference type="GO" id="GO:0090729">
    <property type="term" value="F:toxin activity"/>
    <property type="evidence" value="ECO:0007669"/>
    <property type="project" value="UniProtKB-KW"/>
</dbReference>
<dbReference type="Gene3D" id="1.10.2010.20">
    <property type="match status" value="1"/>
</dbReference>
<reference key="1">
    <citation type="journal article" date="1998" name="Arch. Insect Biochem. Physiol.">
        <title>Novel insecticidal peptides from Tegenaria agrestis spider venom may have a direct effect on the insect central nervous system.</title>
        <authorList>
            <person name="Johnson J.H."/>
            <person name="Bloomquist J.R."/>
            <person name="Krapcho K.J."/>
            <person name="Kral R.M. Jr."/>
            <person name="Trovato R."/>
            <person name="Eppler K.G."/>
            <person name="Morgan T.K."/>
            <person name="Delmar E.G."/>
        </authorList>
    </citation>
    <scope>NUCLEOTIDE SEQUENCE [MRNA]</scope>
    <scope>PROTEIN SEQUENCE OF 18-27</scope>
    <scope>AMIDATION AT LYS-67</scope>
    <scope>MASS SPECTROMETRY</scope>
    <scope>FUNCTION</scope>
    <scope>SUBCELLULAR LOCATION</scope>
    <source>
        <tissue>Venom</tissue>
        <tissue>Venom gland</tissue>
    </source>
</reference>
<accession>O46168</accession>
<keyword id="KW-0027">Amidation</keyword>
<keyword id="KW-0903">Direct protein sequencing</keyword>
<keyword id="KW-1015">Disulfide bond</keyword>
<keyword id="KW-0964">Secreted</keyword>
<keyword id="KW-0732">Signal</keyword>
<keyword id="KW-0800">Toxin</keyword>